<protein>
    <recommendedName>
        <fullName evidence="1">Elongation factor P--(R)-beta-lysine ligase</fullName>
        <shortName evidence="1">EF-P--(R)-beta-lysine ligase</shortName>
        <ecNumber evidence="1">6.3.2.-</ecNumber>
    </recommendedName>
    <alternativeName>
        <fullName evidence="1">EF-P post-translational modification enzyme A</fullName>
    </alternativeName>
    <alternativeName>
        <fullName evidence="1">EF-P-lysine lysyltransferase</fullName>
    </alternativeName>
</protein>
<organism>
    <name type="scientific">Histophilus somni (strain 2336)</name>
    <name type="common">Haemophilus somnus</name>
    <dbReference type="NCBI Taxonomy" id="228400"/>
    <lineage>
        <taxon>Bacteria</taxon>
        <taxon>Pseudomonadati</taxon>
        <taxon>Pseudomonadota</taxon>
        <taxon>Gammaproteobacteria</taxon>
        <taxon>Pasteurellales</taxon>
        <taxon>Pasteurellaceae</taxon>
        <taxon>Histophilus</taxon>
    </lineage>
</organism>
<dbReference type="EC" id="6.3.2.-" evidence="1"/>
<dbReference type="EMBL" id="CP000947">
    <property type="protein sequence ID" value="ACA32455.1"/>
    <property type="molecule type" value="Genomic_DNA"/>
</dbReference>
<dbReference type="RefSeq" id="WP_011609430.1">
    <property type="nucleotide sequence ID" value="NC_010519.1"/>
</dbReference>
<dbReference type="SMR" id="B0USM2"/>
<dbReference type="STRING" id="228400.HSM_0783"/>
<dbReference type="GeneID" id="31487072"/>
<dbReference type="KEGG" id="hsm:HSM_0783"/>
<dbReference type="HOGENOM" id="CLU_008255_1_1_6"/>
<dbReference type="GO" id="GO:0005829">
    <property type="term" value="C:cytosol"/>
    <property type="evidence" value="ECO:0007669"/>
    <property type="project" value="TreeGrafter"/>
</dbReference>
<dbReference type="GO" id="GO:0016880">
    <property type="term" value="F:acid-ammonia (or amide) ligase activity"/>
    <property type="evidence" value="ECO:0007669"/>
    <property type="project" value="UniProtKB-UniRule"/>
</dbReference>
<dbReference type="GO" id="GO:0005524">
    <property type="term" value="F:ATP binding"/>
    <property type="evidence" value="ECO:0007669"/>
    <property type="project" value="UniProtKB-UniRule"/>
</dbReference>
<dbReference type="GO" id="GO:0004824">
    <property type="term" value="F:lysine-tRNA ligase activity"/>
    <property type="evidence" value="ECO:0007669"/>
    <property type="project" value="InterPro"/>
</dbReference>
<dbReference type="GO" id="GO:0000049">
    <property type="term" value="F:tRNA binding"/>
    <property type="evidence" value="ECO:0007669"/>
    <property type="project" value="TreeGrafter"/>
</dbReference>
<dbReference type="GO" id="GO:0006430">
    <property type="term" value="P:lysyl-tRNA aminoacylation"/>
    <property type="evidence" value="ECO:0007669"/>
    <property type="project" value="InterPro"/>
</dbReference>
<dbReference type="FunFam" id="3.30.930.10:FF:000017">
    <property type="entry name" value="Elongation factor P--(R)-beta-lysine ligase"/>
    <property type="match status" value="1"/>
</dbReference>
<dbReference type="Gene3D" id="3.30.930.10">
    <property type="entry name" value="Bira Bifunctional Protein, Domain 2"/>
    <property type="match status" value="1"/>
</dbReference>
<dbReference type="HAMAP" id="MF_00174">
    <property type="entry name" value="EF_P_modif_A"/>
    <property type="match status" value="1"/>
</dbReference>
<dbReference type="InterPro" id="IPR004364">
    <property type="entry name" value="Aa-tRNA-synt_II"/>
</dbReference>
<dbReference type="InterPro" id="IPR006195">
    <property type="entry name" value="aa-tRNA-synth_II"/>
</dbReference>
<dbReference type="InterPro" id="IPR045864">
    <property type="entry name" value="aa-tRNA-synth_II/BPL/LPL"/>
</dbReference>
<dbReference type="InterPro" id="IPR004525">
    <property type="entry name" value="EpmA"/>
</dbReference>
<dbReference type="InterPro" id="IPR018149">
    <property type="entry name" value="Lys-tRNA-synth_II_C"/>
</dbReference>
<dbReference type="NCBIfam" id="TIGR00462">
    <property type="entry name" value="genX"/>
    <property type="match status" value="1"/>
</dbReference>
<dbReference type="NCBIfam" id="NF006828">
    <property type="entry name" value="PRK09350.1"/>
    <property type="match status" value="1"/>
</dbReference>
<dbReference type="PANTHER" id="PTHR42918:SF6">
    <property type="entry name" value="ELONGATION FACTOR P--(R)-BETA-LYSINE LIGASE"/>
    <property type="match status" value="1"/>
</dbReference>
<dbReference type="PANTHER" id="PTHR42918">
    <property type="entry name" value="LYSYL-TRNA SYNTHETASE"/>
    <property type="match status" value="1"/>
</dbReference>
<dbReference type="Pfam" id="PF00152">
    <property type="entry name" value="tRNA-synt_2"/>
    <property type="match status" value="1"/>
</dbReference>
<dbReference type="PRINTS" id="PR00982">
    <property type="entry name" value="TRNASYNTHLYS"/>
</dbReference>
<dbReference type="SUPFAM" id="SSF55681">
    <property type="entry name" value="Class II aaRS and biotin synthetases"/>
    <property type="match status" value="1"/>
</dbReference>
<dbReference type="PROSITE" id="PS50862">
    <property type="entry name" value="AA_TRNA_LIGASE_II"/>
    <property type="match status" value="1"/>
</dbReference>
<accession>B0USM2</accession>
<comment type="function">
    <text evidence="1">With EpmB is involved in the beta-lysylation step of the post-translational modification of translation elongation factor P (EF-P). Catalyzes the ATP-dependent activation of (R)-beta-lysine produced by EpmB, forming a lysyl-adenylate, from which the beta-lysyl moiety is then transferred to the epsilon-amino group of a conserved specific lysine residue in EF-P.</text>
</comment>
<comment type="catalytic activity">
    <reaction evidence="1">
        <text>D-beta-lysine + L-lysyl-[protein] + ATP = N(6)-((3R)-3,6-diaminohexanoyl)-L-lysyl-[protein] + AMP + diphosphate + H(+)</text>
        <dbReference type="Rhea" id="RHEA:83435"/>
        <dbReference type="Rhea" id="RHEA-COMP:9752"/>
        <dbReference type="Rhea" id="RHEA-COMP:20131"/>
        <dbReference type="ChEBI" id="CHEBI:15378"/>
        <dbReference type="ChEBI" id="CHEBI:29969"/>
        <dbReference type="ChEBI" id="CHEBI:30616"/>
        <dbReference type="ChEBI" id="CHEBI:33019"/>
        <dbReference type="ChEBI" id="CHEBI:84138"/>
        <dbReference type="ChEBI" id="CHEBI:156053"/>
        <dbReference type="ChEBI" id="CHEBI:456215"/>
    </reaction>
    <physiologicalReaction direction="left-to-right" evidence="1">
        <dbReference type="Rhea" id="RHEA:83436"/>
    </physiologicalReaction>
</comment>
<comment type="subunit">
    <text evidence="1">Homodimer.</text>
</comment>
<comment type="similarity">
    <text evidence="1">Belongs to the class-II aminoacyl-tRNA synthetase family. EpmA subfamily.</text>
</comment>
<gene>
    <name evidence="1" type="primary">epmA</name>
    <name type="synonym">yjeA</name>
    <name type="ordered locus">HSM_0783</name>
</gene>
<reference key="1">
    <citation type="submission" date="2008-02" db="EMBL/GenBank/DDBJ databases">
        <title>Complete sequence of Haemophilus somnus 2336.</title>
        <authorList>
            <consortium name="US DOE Joint Genome Institute"/>
            <person name="Siddaramappa S."/>
            <person name="Duncan A.J."/>
            <person name="Challacombe J.F."/>
            <person name="Rainey D."/>
            <person name="Gillaspy A.F."/>
            <person name="Carson M."/>
            <person name="Gipson J."/>
            <person name="Gipson M."/>
            <person name="Bruce D."/>
            <person name="Detter J.C."/>
            <person name="Han C.S."/>
            <person name="Land M."/>
            <person name="Tapia R."/>
            <person name="Thompson L.S."/>
            <person name="Orvis J."/>
            <person name="Zaitshik J."/>
            <person name="Barnes G."/>
            <person name="Brettin T.S."/>
            <person name="Dyer D.W."/>
            <person name="Inzana T.J."/>
        </authorList>
    </citation>
    <scope>NUCLEOTIDE SEQUENCE [LARGE SCALE GENOMIC DNA]</scope>
    <source>
        <strain>2336</strain>
    </source>
</reference>
<name>EPMA_HISS2</name>
<sequence length="323" mass="36724">MSLNEQWQPSASIQNLLARAKIIADIRRFFTERGLLEVETPVLSEFGVTDVHLSTFSTAFTSPFMEKSKTLWLTTSPEYHMKRLLAAGSGAIFQLCKVFRNEESGKKHNPEFTMLEWYRPHFDMHRLINEVDDLLQQTLDCEPAEMASYQFVFQEHVGIDPLSAPINELIEKARECHLDGAENEDRDTLLQFLFSTLVEPNIGQNKPIAVYHFPATQAALAQISSEDHRVAERFEFYYKGIELANGFNELTDAQEQEHRFNQDNRLREQLGLPQHEIDHRFLGALQAGLPNTAGVALGVDRLIMLALGAENISEVISFNIDCA</sequence>
<keyword id="KW-0067">ATP-binding</keyword>
<keyword id="KW-0436">Ligase</keyword>
<keyword id="KW-0547">Nucleotide-binding</keyword>
<evidence type="ECO:0000255" key="1">
    <source>
        <dbReference type="HAMAP-Rule" id="MF_00174"/>
    </source>
</evidence>
<feature type="chain" id="PRO_1000077139" description="Elongation factor P--(R)-beta-lysine ligase">
    <location>
        <begin position="1"/>
        <end position="323"/>
    </location>
</feature>
<feature type="binding site" evidence="1">
    <location>
        <begin position="76"/>
        <end position="78"/>
    </location>
    <ligand>
        <name>substrate</name>
    </ligand>
</feature>
<feature type="binding site" evidence="1">
    <location>
        <begin position="100"/>
        <end position="102"/>
    </location>
    <ligand>
        <name>ATP</name>
        <dbReference type="ChEBI" id="CHEBI:30616"/>
    </ligand>
</feature>
<feature type="binding site" evidence="1">
    <location>
        <position position="109"/>
    </location>
    <ligand>
        <name>ATP</name>
        <dbReference type="ChEBI" id="CHEBI:30616"/>
    </ligand>
</feature>
<feature type="binding site" evidence="1">
    <location>
        <position position="118"/>
    </location>
    <ligand>
        <name>substrate</name>
    </ligand>
</feature>
<feature type="binding site" evidence="1">
    <location>
        <begin position="242"/>
        <end position="243"/>
    </location>
    <ligand>
        <name>ATP</name>
        <dbReference type="ChEBI" id="CHEBI:30616"/>
    </ligand>
</feature>
<feature type="binding site" evidence="1">
    <location>
        <position position="249"/>
    </location>
    <ligand>
        <name>substrate</name>
    </ligand>
</feature>
<feature type="binding site" evidence="1">
    <location>
        <position position="298"/>
    </location>
    <ligand>
        <name>ATP</name>
        <dbReference type="ChEBI" id="CHEBI:30616"/>
    </ligand>
</feature>
<proteinExistence type="inferred from homology"/>